<comment type="function">
    <text evidence="1 2">Probably functions as a component of the Arp2/3 complex which is involved in regulation of actin polymerization and together with an activating nucleation-promoting factor (NPF) mediates the formation of branched actin networks (By similarity). In addition to its role in the cytoplasmic cytoskeleton, the Arp2/3 complex also promotes actin polymerization in the nucleus, thereby regulating gene transcription and repair of damaged DNA (By similarity).</text>
</comment>
<comment type="subunit">
    <text evidence="1">Component of the Arp2/3 complex.</text>
</comment>
<comment type="subcellular location">
    <subcellularLocation>
        <location evidence="2">Cytoplasm</location>
        <location evidence="2">Cytoskeleton</location>
    </subcellularLocation>
    <subcellularLocation>
        <location evidence="1">Nucleus</location>
    </subcellularLocation>
</comment>
<comment type="similarity">
    <text evidence="4">Belongs to the WD repeat ARPC1 family.</text>
</comment>
<dbReference type="EMBL" id="CM004482">
    <property type="protein sequence ID" value="OCT63973.1"/>
    <property type="molecule type" value="Genomic_DNA"/>
</dbReference>
<dbReference type="SMR" id="A0A1L8EXB5"/>
<dbReference type="STRING" id="8355.A0A1L8EXB5"/>
<dbReference type="PaxDb" id="8355-A0A1L8EXB5"/>
<dbReference type="GeneID" id="108701505"/>
<dbReference type="KEGG" id="xla:108701505"/>
<dbReference type="AGR" id="Xenbase:XB-GENE-17343515"/>
<dbReference type="CTD" id="108701505"/>
<dbReference type="OMA" id="YVWEPSP"/>
<dbReference type="OrthoDB" id="406844at2759"/>
<dbReference type="Proteomes" id="UP000186698">
    <property type="component" value="Chromosome 9_10L"/>
</dbReference>
<dbReference type="Proteomes" id="UP000694892">
    <property type="component" value="Chromosome 9_10L"/>
</dbReference>
<dbReference type="Bgee" id="108701505">
    <property type="expression patterns" value="Expressed in zone of skin and 19 other cell types or tissues"/>
</dbReference>
<dbReference type="GO" id="GO:0005885">
    <property type="term" value="C:Arp2/3 protein complex"/>
    <property type="evidence" value="ECO:0000250"/>
    <property type="project" value="UniProtKB"/>
</dbReference>
<dbReference type="GO" id="GO:0005737">
    <property type="term" value="C:cytoplasm"/>
    <property type="evidence" value="ECO:0007669"/>
    <property type="project" value="UniProtKB-KW"/>
</dbReference>
<dbReference type="GO" id="GO:0005634">
    <property type="term" value="C:nucleus"/>
    <property type="evidence" value="ECO:0000250"/>
    <property type="project" value="UniProtKB"/>
</dbReference>
<dbReference type="GO" id="GO:0035861">
    <property type="term" value="C:site of double-strand break"/>
    <property type="evidence" value="ECO:0000250"/>
    <property type="project" value="UniProtKB"/>
</dbReference>
<dbReference type="GO" id="GO:0051015">
    <property type="term" value="F:actin filament binding"/>
    <property type="evidence" value="ECO:0000318"/>
    <property type="project" value="GO_Central"/>
</dbReference>
<dbReference type="GO" id="GO:0034314">
    <property type="term" value="P:Arp2/3 complex-mediated actin nucleation"/>
    <property type="evidence" value="ECO:0000318"/>
    <property type="project" value="GO_Central"/>
</dbReference>
<dbReference type="FunFam" id="2.130.10.10:FF:000030">
    <property type="entry name" value="Actin-related protein 2/3 complex subunit"/>
    <property type="match status" value="1"/>
</dbReference>
<dbReference type="Gene3D" id="2.130.10.10">
    <property type="entry name" value="YVTN repeat-like/Quinoprotein amine dehydrogenase"/>
    <property type="match status" value="1"/>
</dbReference>
<dbReference type="InterPro" id="IPR017383">
    <property type="entry name" value="ARPC1"/>
</dbReference>
<dbReference type="InterPro" id="IPR015943">
    <property type="entry name" value="WD40/YVTN_repeat-like_dom_sf"/>
</dbReference>
<dbReference type="InterPro" id="IPR036322">
    <property type="entry name" value="WD40_repeat_dom_sf"/>
</dbReference>
<dbReference type="InterPro" id="IPR001680">
    <property type="entry name" value="WD40_rpt"/>
</dbReference>
<dbReference type="PANTHER" id="PTHR10709">
    <property type="entry name" value="ACTIN-RELATED PROTEIN 2/3 COMPLEX SUBUNIT 1"/>
    <property type="match status" value="1"/>
</dbReference>
<dbReference type="PANTHER" id="PTHR10709:SF11">
    <property type="entry name" value="ACTIN-RELATED PROTEIN 2_3 COMPLEX SUBUNIT 1A"/>
    <property type="match status" value="1"/>
</dbReference>
<dbReference type="Pfam" id="PF00400">
    <property type="entry name" value="WD40"/>
    <property type="match status" value="2"/>
</dbReference>
<dbReference type="PIRSF" id="PIRSF038093">
    <property type="entry name" value="ARP2/3_su1"/>
    <property type="match status" value="1"/>
</dbReference>
<dbReference type="SMART" id="SM00320">
    <property type="entry name" value="WD40"/>
    <property type="match status" value="5"/>
</dbReference>
<dbReference type="SUPFAM" id="SSF50978">
    <property type="entry name" value="WD40 repeat-like"/>
    <property type="match status" value="1"/>
</dbReference>
<dbReference type="PROSITE" id="PS50082">
    <property type="entry name" value="WD_REPEATS_2"/>
    <property type="match status" value="1"/>
</dbReference>
<dbReference type="PROSITE" id="PS50294">
    <property type="entry name" value="WD_REPEATS_REGION"/>
    <property type="match status" value="1"/>
</dbReference>
<protein>
    <recommendedName>
        <fullName evidence="4">Actin-related protein 2/3 complex subunit 1A-B</fullName>
    </recommendedName>
</protein>
<feature type="chain" id="PRO_0000445568" description="Actin-related protein 2/3 complex subunit 1A-B">
    <location>
        <begin position="1"/>
        <end position="370"/>
    </location>
</feature>
<feature type="repeat" description="WD 1" evidence="3">
    <location>
        <begin position="6"/>
        <end position="45"/>
    </location>
</feature>
<feature type="repeat" description="WD 2" evidence="3">
    <location>
        <begin position="50"/>
        <end position="89"/>
    </location>
</feature>
<feature type="repeat" description="WD 3" evidence="3">
    <location>
        <begin position="140"/>
        <end position="179"/>
    </location>
</feature>
<feature type="repeat" description="WD 4" evidence="3">
    <location>
        <begin position="202"/>
        <end position="241"/>
    </location>
</feature>
<feature type="repeat" description="WD 5" evidence="3">
    <location>
        <begin position="244"/>
        <end position="284"/>
    </location>
</feature>
<feature type="repeat" description="WD 6" evidence="3">
    <location>
        <begin position="322"/>
        <end position="365"/>
    </location>
</feature>
<keyword id="KW-0009">Actin-binding</keyword>
<keyword id="KW-0963">Cytoplasm</keyword>
<keyword id="KW-0206">Cytoskeleton</keyword>
<keyword id="KW-0539">Nucleus</keyword>
<keyword id="KW-1185">Reference proteome</keyword>
<keyword id="KW-0677">Repeat</keyword>
<keyword id="KW-0853">WD repeat</keyword>
<sequence length="370" mass="41622">MSLHQFLLEPITCHAWNKDLTQIAISPNNHEVHIYKNSGNQWVKCHELKEHNGHITGIDWAPKSDRIVTCGADRNAYVWSQKDGVWKPTLVILRINRAATFVKWSPLENKFAVGSGARLISVCYFESENDWWVSKHIKKPIRSTVLSLDWHPNNVLLAAGSCDFKTRVFSAYIKEVDEKPASTPWGSKMPFGQMMAEFGGVSSGGWVHSVSFSASGNKLAWVSHDSTVSVADASKNMSVSQLKTEFLPLLSVIFVSENSLIAAGHDCCPMLFTYDEQGSLTFVSKLDIPKQSTQRNISAMERFRNMDKRATTEDRNTTLETLHQNSITQVSIYDGDKTDCRKFCTTGIDGAMTIWDFKTLESYIQGLRIM</sequence>
<name>AR1AB_XENLA</name>
<accession>A0A1L8EXB5</accession>
<proteinExistence type="inferred from homology"/>
<organism>
    <name type="scientific">Xenopus laevis</name>
    <name type="common">African clawed frog</name>
    <dbReference type="NCBI Taxonomy" id="8355"/>
    <lineage>
        <taxon>Eukaryota</taxon>
        <taxon>Metazoa</taxon>
        <taxon>Chordata</taxon>
        <taxon>Craniata</taxon>
        <taxon>Vertebrata</taxon>
        <taxon>Euteleostomi</taxon>
        <taxon>Amphibia</taxon>
        <taxon>Batrachia</taxon>
        <taxon>Anura</taxon>
        <taxon>Pipoidea</taxon>
        <taxon>Pipidae</taxon>
        <taxon>Xenopodinae</taxon>
        <taxon>Xenopus</taxon>
        <taxon>Xenopus</taxon>
    </lineage>
</organism>
<reference key="1">
    <citation type="journal article" date="2016" name="Nature">
        <title>Genome evolution in the allotetraploid frog Xenopus laevis.</title>
        <authorList>
            <person name="Session A.M."/>
            <person name="Uno Y."/>
            <person name="Kwon T."/>
            <person name="Chapman J.A."/>
            <person name="Toyoda A."/>
            <person name="Takahashi S."/>
            <person name="Fukui A."/>
            <person name="Hikosaka A."/>
            <person name="Suzuki A."/>
            <person name="Kondo M."/>
            <person name="van Heeringen S.J."/>
            <person name="Quigley I."/>
            <person name="Heinz S."/>
            <person name="Ogino H."/>
            <person name="Ochi H."/>
            <person name="Hellsten U."/>
            <person name="Lyons J.B."/>
            <person name="Simakov O."/>
            <person name="Putnam N."/>
            <person name="Stites J."/>
            <person name="Kuroki Y."/>
            <person name="Tanaka T."/>
            <person name="Michiue T."/>
            <person name="Watanabe M."/>
            <person name="Bogdanovic O."/>
            <person name="Lister R."/>
            <person name="Georgiou G."/>
            <person name="Paranjpe S.S."/>
            <person name="van Kruijsbergen I."/>
            <person name="Shu S."/>
            <person name="Carlson J."/>
            <person name="Kinoshita T."/>
            <person name="Ohta Y."/>
            <person name="Mawaribuchi S."/>
            <person name="Jenkins J."/>
            <person name="Grimwood J."/>
            <person name="Schmutz J."/>
            <person name="Mitros T."/>
            <person name="Mozaffari S.V."/>
            <person name="Suzuki Y."/>
            <person name="Haramoto Y."/>
            <person name="Yamamoto T.S."/>
            <person name="Takagi C."/>
            <person name="Heald R."/>
            <person name="Miller K."/>
            <person name="Haudenschild C."/>
            <person name="Kitzman J."/>
            <person name="Nakayama T."/>
            <person name="Izutsu Y."/>
            <person name="Robert J."/>
            <person name="Fortriede J."/>
            <person name="Burns K."/>
            <person name="Lotay V."/>
            <person name="Karimi K."/>
            <person name="Yasuoka Y."/>
            <person name="Dichmann D.S."/>
            <person name="Flajnik M.F."/>
            <person name="Houston D.W."/>
            <person name="Shendure J."/>
            <person name="DuPasquier L."/>
            <person name="Vize P.D."/>
            <person name="Zorn A.M."/>
            <person name="Ito M."/>
            <person name="Marcotte E.M."/>
            <person name="Wallingford J.B."/>
            <person name="Ito Y."/>
            <person name="Asashima M."/>
            <person name="Ueno N."/>
            <person name="Matsuda Y."/>
            <person name="Veenstra G.J."/>
            <person name="Fujiyama A."/>
            <person name="Harland R.M."/>
            <person name="Taira M."/>
            <person name="Rokhsar D.S."/>
        </authorList>
    </citation>
    <scope>NUCLEOTIDE SEQUENCE [LARGE SCALE GENOMIC DNA]</scope>
    <source>
        <strain>J</strain>
    </source>
</reference>
<gene>
    <name type="primary">arpc1a-b</name>
    <name evidence="5" type="ORF">XELAEV_18045070mg</name>
</gene>
<evidence type="ECO:0000250" key="1">
    <source>
        <dbReference type="UniProtKB" id="Q8AVT9"/>
    </source>
</evidence>
<evidence type="ECO:0000250" key="2">
    <source>
        <dbReference type="UniProtKB" id="Q92747"/>
    </source>
</evidence>
<evidence type="ECO:0000255" key="3"/>
<evidence type="ECO:0000305" key="4"/>
<evidence type="ECO:0000312" key="5">
    <source>
        <dbReference type="EMBL" id="OCT63973.1"/>
    </source>
</evidence>